<feature type="chain" id="PRO_0000252272" description="Vacuolar basic amino acid transporter 4">
    <location>
        <begin position="1"/>
        <end position="768"/>
    </location>
</feature>
<feature type="topological domain" description="Cytoplasmic" evidence="1">
    <location>
        <begin position="1"/>
        <end position="252"/>
    </location>
</feature>
<feature type="transmembrane region" description="Helical" evidence="1">
    <location>
        <begin position="253"/>
        <end position="273"/>
    </location>
</feature>
<feature type="topological domain" description="Vacuolar" evidence="1">
    <location>
        <begin position="274"/>
        <end position="282"/>
    </location>
</feature>
<feature type="transmembrane region" description="Helical" evidence="1">
    <location>
        <begin position="283"/>
        <end position="305"/>
    </location>
</feature>
<feature type="topological domain" description="Cytoplasmic" evidence="1">
    <location>
        <begin position="306"/>
        <end position="311"/>
    </location>
</feature>
<feature type="transmembrane region" description="Helical" evidence="1">
    <location>
        <begin position="312"/>
        <end position="331"/>
    </location>
</feature>
<feature type="topological domain" description="Vacuolar" evidence="1">
    <location>
        <begin position="332"/>
        <end position="334"/>
    </location>
</feature>
<feature type="transmembrane region" description="Helical" evidence="1">
    <location>
        <begin position="335"/>
        <end position="357"/>
    </location>
</feature>
<feature type="topological domain" description="Cytoplasmic" evidence="1">
    <location>
        <begin position="358"/>
        <end position="375"/>
    </location>
</feature>
<feature type="transmembrane region" description="Helical" evidence="1">
    <location>
        <begin position="376"/>
        <end position="396"/>
    </location>
</feature>
<feature type="topological domain" description="Vacuolar" evidence="1">
    <location>
        <begin position="397"/>
        <end position="406"/>
    </location>
</feature>
<feature type="transmembrane region" description="Helical" evidence="1">
    <location>
        <begin position="407"/>
        <end position="427"/>
    </location>
</feature>
<feature type="topological domain" description="Cytoplasmic" evidence="1">
    <location>
        <begin position="428"/>
        <end position="447"/>
    </location>
</feature>
<feature type="transmembrane region" description="Helical" evidence="1">
    <location>
        <begin position="448"/>
        <end position="468"/>
    </location>
</feature>
<feature type="topological domain" description="Vacuolar" evidence="1">
    <location>
        <begin position="469"/>
        <end position="481"/>
    </location>
</feature>
<feature type="transmembrane region" description="Helical" evidence="1">
    <location>
        <begin position="482"/>
        <end position="502"/>
    </location>
</feature>
<feature type="topological domain" description="Cytoplasmic" evidence="1">
    <location>
        <begin position="503"/>
        <end position="522"/>
    </location>
</feature>
<feature type="transmembrane region" description="Helical" evidence="1">
    <location>
        <begin position="523"/>
        <end position="543"/>
    </location>
</feature>
<feature type="topological domain" description="Vacuolar" evidence="1">
    <location>
        <begin position="544"/>
        <end position="562"/>
    </location>
</feature>
<feature type="transmembrane region" description="Helical" evidence="1">
    <location>
        <begin position="563"/>
        <end position="583"/>
    </location>
</feature>
<feature type="topological domain" description="Cytoplasmic" evidence="1">
    <location>
        <begin position="584"/>
        <end position="587"/>
    </location>
</feature>
<feature type="transmembrane region" description="Helical" evidence="1">
    <location>
        <begin position="588"/>
        <end position="608"/>
    </location>
</feature>
<feature type="topological domain" description="Vacuolar" evidence="1">
    <location>
        <begin position="609"/>
        <end position="617"/>
    </location>
</feature>
<feature type="transmembrane region" description="Helical" evidence="1">
    <location>
        <begin position="618"/>
        <end position="638"/>
    </location>
</feature>
<feature type="topological domain" description="Cytoplasmic" evidence="1">
    <location>
        <begin position="639"/>
        <end position="653"/>
    </location>
</feature>
<feature type="transmembrane region" description="Helical" evidence="1">
    <location>
        <begin position="654"/>
        <end position="674"/>
    </location>
</feature>
<feature type="topological domain" description="Vacuolar" evidence="1">
    <location>
        <begin position="675"/>
        <end position="734"/>
    </location>
</feature>
<feature type="transmembrane region" description="Helical" evidence="1">
    <location>
        <begin position="735"/>
        <end position="755"/>
    </location>
</feature>
<feature type="topological domain" description="Cytoplasmic" evidence="1">
    <location>
        <begin position="756"/>
        <end position="768"/>
    </location>
</feature>
<feature type="region of interest" description="Disordered" evidence="2">
    <location>
        <begin position="34"/>
        <end position="172"/>
    </location>
</feature>
<feature type="coiled-coil region" evidence="1">
    <location>
        <begin position="9"/>
        <end position="40"/>
    </location>
</feature>
<feature type="compositionally biased region" description="Basic and acidic residues" evidence="2">
    <location>
        <begin position="110"/>
        <end position="121"/>
    </location>
</feature>
<feature type="compositionally biased region" description="Polar residues" evidence="2">
    <location>
        <begin position="132"/>
        <end position="159"/>
    </location>
</feature>
<feature type="modified residue" description="Phosphoserine" evidence="9">
    <location>
        <position position="62"/>
    </location>
</feature>
<feature type="modified residue" description="Phosphoserine" evidence="8 9">
    <location>
        <position position="99"/>
    </location>
</feature>
<feature type="modified residue" description="Phosphoserine" evidence="7 8 9">
    <location>
        <position position="106"/>
    </location>
</feature>
<feature type="modified residue" description="Phosphoserine" evidence="9">
    <location>
        <position position="160"/>
    </location>
</feature>
<feature type="modified residue" description="Phosphoserine" evidence="8">
    <location>
        <position position="192"/>
    </location>
</feature>
<feature type="glycosylation site" description="N-linked (GlcNAc...) asparagine" evidence="1">
    <location>
        <position position="480"/>
    </location>
</feature>
<feature type="glycosylation site" description="N-linked (GlcNAc...) asparagine" evidence="1">
    <location>
        <position position="553"/>
    </location>
</feature>
<organism>
    <name type="scientific">Saccharomyces cerevisiae (strain ATCC 204508 / S288c)</name>
    <name type="common">Baker's yeast</name>
    <dbReference type="NCBI Taxonomy" id="559292"/>
    <lineage>
        <taxon>Eukaryota</taxon>
        <taxon>Fungi</taxon>
        <taxon>Dikarya</taxon>
        <taxon>Ascomycota</taxon>
        <taxon>Saccharomycotina</taxon>
        <taxon>Saccharomycetes</taxon>
        <taxon>Saccharomycetales</taxon>
        <taxon>Saccharomycetaceae</taxon>
        <taxon>Saccharomyces</taxon>
    </lineage>
</organism>
<comment type="function">
    <text evidence="4">Transporter required for vacuolar uptake of basic amino acids.</text>
</comment>
<comment type="subcellular location">
    <subcellularLocation>
        <location evidence="3 5">Vacuole membrane</location>
        <topology evidence="3 5">Multi-pass membrane protein</topology>
    </subcellularLocation>
</comment>
<comment type="similarity">
    <text evidence="6">Belongs to the major facilitator superfamily.</text>
</comment>
<name>VBA4_YEAST</name>
<dbReference type="EMBL" id="Z48758">
    <property type="protein sequence ID" value="CAA88672.1"/>
    <property type="molecule type" value="Genomic_DNA"/>
</dbReference>
<dbReference type="EMBL" id="BK006938">
    <property type="protein sequence ID" value="DAA11964.1"/>
    <property type="molecule type" value="Genomic_DNA"/>
</dbReference>
<dbReference type="PIR" id="S52684">
    <property type="entry name" value="S52684"/>
</dbReference>
<dbReference type="RefSeq" id="NP_010404.1">
    <property type="nucleotide sequence ID" value="NM_001180427.1"/>
</dbReference>
<dbReference type="SMR" id="Q04602"/>
<dbReference type="BioGRID" id="32175">
    <property type="interactions" value="108"/>
</dbReference>
<dbReference type="DIP" id="DIP-8662N"/>
<dbReference type="FunCoup" id="Q04602">
    <property type="interactions" value="54"/>
</dbReference>
<dbReference type="IntAct" id="Q04602">
    <property type="interactions" value="30"/>
</dbReference>
<dbReference type="MINT" id="Q04602"/>
<dbReference type="STRING" id="4932.YDR119W"/>
<dbReference type="MoonDB" id="Q04602">
    <property type="type" value="Predicted"/>
</dbReference>
<dbReference type="TCDB" id="2.A.1.48.5">
    <property type="family name" value="the major facilitator superfamily (mfs)"/>
</dbReference>
<dbReference type="GlyCosmos" id="Q04602">
    <property type="glycosylation" value="2 sites, No reported glycans"/>
</dbReference>
<dbReference type="GlyGen" id="Q04602">
    <property type="glycosylation" value="3 sites"/>
</dbReference>
<dbReference type="iPTMnet" id="Q04602"/>
<dbReference type="PaxDb" id="4932-YDR119W"/>
<dbReference type="PeptideAtlas" id="Q04602"/>
<dbReference type="EnsemblFungi" id="YDR119W_mRNA">
    <property type="protein sequence ID" value="YDR119W"/>
    <property type="gene ID" value="YDR119W"/>
</dbReference>
<dbReference type="GeneID" id="851697"/>
<dbReference type="KEGG" id="sce:YDR119W"/>
<dbReference type="AGR" id="SGD:S000002526"/>
<dbReference type="SGD" id="S000002526">
    <property type="gene designation" value="VBA4"/>
</dbReference>
<dbReference type="VEuPathDB" id="FungiDB:YDR119W"/>
<dbReference type="eggNOG" id="KOG0254">
    <property type="taxonomic scope" value="Eukaryota"/>
</dbReference>
<dbReference type="HOGENOM" id="CLU_021267_0_0_1"/>
<dbReference type="InParanoid" id="Q04602"/>
<dbReference type="OMA" id="EFHELWR"/>
<dbReference type="OrthoDB" id="3437016at2759"/>
<dbReference type="BioCyc" id="YEAST:G3O-29719-MONOMER"/>
<dbReference type="BioGRID-ORCS" id="851697">
    <property type="hits" value="0 hits in 10 CRISPR screens"/>
</dbReference>
<dbReference type="PRO" id="PR:Q04602"/>
<dbReference type="Proteomes" id="UP000002311">
    <property type="component" value="Chromosome IV"/>
</dbReference>
<dbReference type="RNAct" id="Q04602">
    <property type="molecule type" value="protein"/>
</dbReference>
<dbReference type="GO" id="GO:0000329">
    <property type="term" value="C:fungal-type vacuole membrane"/>
    <property type="evidence" value="ECO:0007005"/>
    <property type="project" value="SGD"/>
</dbReference>
<dbReference type="GO" id="GO:0015174">
    <property type="term" value="F:basic amino acid transmembrane transporter activity"/>
    <property type="evidence" value="ECO:0000318"/>
    <property type="project" value="GO_Central"/>
</dbReference>
<dbReference type="GO" id="GO:0015802">
    <property type="term" value="P:basic amino acid transport"/>
    <property type="evidence" value="ECO:0000318"/>
    <property type="project" value="GO_Central"/>
</dbReference>
<dbReference type="GO" id="GO:0055085">
    <property type="term" value="P:transmembrane transport"/>
    <property type="evidence" value="ECO:0000318"/>
    <property type="project" value="GO_Central"/>
</dbReference>
<dbReference type="FunFam" id="1.20.1250.20:FF:000840">
    <property type="entry name" value="VBA4p protein"/>
    <property type="match status" value="1"/>
</dbReference>
<dbReference type="Gene3D" id="1.20.1250.20">
    <property type="entry name" value="MFS general substrate transporter like domains"/>
    <property type="match status" value="2"/>
</dbReference>
<dbReference type="InterPro" id="IPR011701">
    <property type="entry name" value="MFS"/>
</dbReference>
<dbReference type="InterPro" id="IPR020846">
    <property type="entry name" value="MFS_dom"/>
</dbReference>
<dbReference type="InterPro" id="IPR036259">
    <property type="entry name" value="MFS_trans_sf"/>
</dbReference>
<dbReference type="PANTHER" id="PTHR23501">
    <property type="entry name" value="MAJOR FACILITATOR SUPERFAMILY"/>
    <property type="match status" value="1"/>
</dbReference>
<dbReference type="PANTHER" id="PTHR23501:SF191">
    <property type="entry name" value="VACUOLAR BASIC AMINO ACID TRANSPORTER 4"/>
    <property type="match status" value="1"/>
</dbReference>
<dbReference type="Pfam" id="PF07690">
    <property type="entry name" value="MFS_1"/>
    <property type="match status" value="1"/>
</dbReference>
<dbReference type="SUPFAM" id="SSF103473">
    <property type="entry name" value="MFS general substrate transporter"/>
    <property type="match status" value="1"/>
</dbReference>
<dbReference type="PROSITE" id="PS50850">
    <property type="entry name" value="MFS"/>
    <property type="match status" value="1"/>
</dbReference>
<keyword id="KW-0029">Amino-acid transport</keyword>
<keyword id="KW-0175">Coiled coil</keyword>
<keyword id="KW-0325">Glycoprotein</keyword>
<keyword id="KW-0472">Membrane</keyword>
<keyword id="KW-0597">Phosphoprotein</keyword>
<keyword id="KW-1185">Reference proteome</keyword>
<keyword id="KW-0812">Transmembrane</keyword>
<keyword id="KW-1133">Transmembrane helix</keyword>
<keyword id="KW-0813">Transport</keyword>
<keyword id="KW-0926">Vacuole</keyword>
<gene>
    <name type="primary">VBA4</name>
    <name type="ordered locus">YDR119W</name>
</gene>
<proteinExistence type="evidence at protein level"/>
<reference key="1">
    <citation type="journal article" date="1997" name="Nature">
        <title>The nucleotide sequence of Saccharomyces cerevisiae chromosome IV.</title>
        <authorList>
            <person name="Jacq C."/>
            <person name="Alt-Moerbe J."/>
            <person name="Andre B."/>
            <person name="Arnold W."/>
            <person name="Bahr A."/>
            <person name="Ballesta J.P.G."/>
            <person name="Bargues M."/>
            <person name="Baron L."/>
            <person name="Becker A."/>
            <person name="Biteau N."/>
            <person name="Bloecker H."/>
            <person name="Blugeon C."/>
            <person name="Boskovic J."/>
            <person name="Brandt P."/>
            <person name="Brueckner M."/>
            <person name="Buitrago M.J."/>
            <person name="Coster F."/>
            <person name="Delaveau T."/>
            <person name="del Rey F."/>
            <person name="Dujon B."/>
            <person name="Eide L.G."/>
            <person name="Garcia-Cantalejo J.M."/>
            <person name="Goffeau A."/>
            <person name="Gomez-Peris A."/>
            <person name="Granotier C."/>
            <person name="Hanemann V."/>
            <person name="Hankeln T."/>
            <person name="Hoheisel J.D."/>
            <person name="Jaeger W."/>
            <person name="Jimenez A."/>
            <person name="Jonniaux J.-L."/>
            <person name="Kraemer C."/>
            <person name="Kuester H."/>
            <person name="Laamanen P."/>
            <person name="Legros Y."/>
            <person name="Louis E.J."/>
            <person name="Moeller-Rieker S."/>
            <person name="Monnet A."/>
            <person name="Moro M."/>
            <person name="Mueller-Auer S."/>
            <person name="Nussbaumer B."/>
            <person name="Paricio N."/>
            <person name="Paulin L."/>
            <person name="Perea J."/>
            <person name="Perez-Alonso M."/>
            <person name="Perez-Ortin J.E."/>
            <person name="Pohl T.M."/>
            <person name="Prydz H."/>
            <person name="Purnelle B."/>
            <person name="Rasmussen S.W."/>
            <person name="Remacha M.A."/>
            <person name="Revuelta J.L."/>
            <person name="Rieger M."/>
            <person name="Salom D."/>
            <person name="Saluz H.P."/>
            <person name="Saiz J.E."/>
            <person name="Saren A.-M."/>
            <person name="Schaefer M."/>
            <person name="Scharfe M."/>
            <person name="Schmidt E.R."/>
            <person name="Schneider C."/>
            <person name="Scholler P."/>
            <person name="Schwarz S."/>
            <person name="Soler-Mira A."/>
            <person name="Urrestarazu L.A."/>
            <person name="Verhasselt P."/>
            <person name="Vissers S."/>
            <person name="Voet M."/>
            <person name="Volckaert G."/>
            <person name="Wagner G."/>
            <person name="Wambutt R."/>
            <person name="Wedler E."/>
            <person name="Wedler H."/>
            <person name="Woelfl S."/>
            <person name="Harris D.E."/>
            <person name="Bowman S."/>
            <person name="Brown D."/>
            <person name="Churcher C.M."/>
            <person name="Connor R."/>
            <person name="Dedman K."/>
            <person name="Gentles S."/>
            <person name="Hamlin N."/>
            <person name="Hunt S."/>
            <person name="Jones L."/>
            <person name="McDonald S."/>
            <person name="Murphy L.D."/>
            <person name="Niblett D."/>
            <person name="Odell C."/>
            <person name="Oliver K."/>
            <person name="Rajandream M.A."/>
            <person name="Richards C."/>
            <person name="Shore L."/>
            <person name="Walsh S.V."/>
            <person name="Barrell B.G."/>
            <person name="Dietrich F.S."/>
            <person name="Mulligan J.T."/>
            <person name="Allen E."/>
            <person name="Araujo R."/>
            <person name="Aviles E."/>
            <person name="Berno A."/>
            <person name="Carpenter J."/>
            <person name="Chen E."/>
            <person name="Cherry J.M."/>
            <person name="Chung E."/>
            <person name="Duncan M."/>
            <person name="Hunicke-Smith S."/>
            <person name="Hyman R.W."/>
            <person name="Komp C."/>
            <person name="Lashkari D."/>
            <person name="Lew H."/>
            <person name="Lin D."/>
            <person name="Mosedale D."/>
            <person name="Nakahara K."/>
            <person name="Namath A."/>
            <person name="Oefner P."/>
            <person name="Oh C."/>
            <person name="Petel F.X."/>
            <person name="Roberts D."/>
            <person name="Schramm S."/>
            <person name="Schroeder M."/>
            <person name="Shogren T."/>
            <person name="Shroff N."/>
            <person name="Winant A."/>
            <person name="Yelton M.A."/>
            <person name="Botstein D."/>
            <person name="Davis R.W."/>
            <person name="Johnston M."/>
            <person name="Andrews S."/>
            <person name="Brinkman R."/>
            <person name="Cooper J."/>
            <person name="Ding H."/>
            <person name="Du Z."/>
            <person name="Favello A."/>
            <person name="Fulton L."/>
            <person name="Gattung S."/>
            <person name="Greco T."/>
            <person name="Hallsworth K."/>
            <person name="Hawkins J."/>
            <person name="Hillier L.W."/>
            <person name="Jier M."/>
            <person name="Johnson D."/>
            <person name="Johnston L."/>
            <person name="Kirsten J."/>
            <person name="Kucaba T."/>
            <person name="Langston Y."/>
            <person name="Latreille P."/>
            <person name="Le T."/>
            <person name="Mardis E."/>
            <person name="Menezes S."/>
            <person name="Miller N."/>
            <person name="Nhan M."/>
            <person name="Pauley A."/>
            <person name="Peluso D."/>
            <person name="Rifkin L."/>
            <person name="Riles L."/>
            <person name="Taich A."/>
            <person name="Trevaskis E."/>
            <person name="Vignati D."/>
            <person name="Wilcox L."/>
            <person name="Wohldman P."/>
            <person name="Vaudin M."/>
            <person name="Wilson R."/>
            <person name="Waterston R."/>
            <person name="Albermann K."/>
            <person name="Hani J."/>
            <person name="Heumann K."/>
            <person name="Kleine K."/>
            <person name="Mewes H.-W."/>
            <person name="Zollner A."/>
            <person name="Zaccaria P."/>
        </authorList>
    </citation>
    <scope>NUCLEOTIDE SEQUENCE [LARGE SCALE GENOMIC DNA]</scope>
    <source>
        <strain>ATCC 204508 / S288c</strain>
    </source>
</reference>
<reference key="2">
    <citation type="journal article" date="2014" name="G3 (Bethesda)">
        <title>The reference genome sequence of Saccharomyces cerevisiae: Then and now.</title>
        <authorList>
            <person name="Engel S.R."/>
            <person name="Dietrich F.S."/>
            <person name="Fisk D.G."/>
            <person name="Binkley G."/>
            <person name="Balakrishnan R."/>
            <person name="Costanzo M.C."/>
            <person name="Dwight S.S."/>
            <person name="Hitz B.C."/>
            <person name="Karra K."/>
            <person name="Nash R.S."/>
            <person name="Weng S."/>
            <person name="Wong E.D."/>
            <person name="Lloyd P."/>
            <person name="Skrzypek M.S."/>
            <person name="Miyasato S.R."/>
            <person name="Simison M."/>
            <person name="Cherry J.M."/>
        </authorList>
    </citation>
    <scope>GENOME REANNOTATION</scope>
    <source>
        <strain>ATCC 204508 / S288c</strain>
    </source>
</reference>
<reference key="3">
    <citation type="journal article" date="2003" name="Nature">
        <title>Global analysis of protein localization in budding yeast.</title>
        <authorList>
            <person name="Huh W.-K."/>
            <person name="Falvo J.V."/>
            <person name="Gerke L.C."/>
            <person name="Carroll A.S."/>
            <person name="Howson R.W."/>
            <person name="Weissman J.S."/>
            <person name="O'Shea E.K."/>
        </authorList>
    </citation>
    <scope>SUBCELLULAR LOCATION [LARGE SCALE ANALYSIS]</scope>
</reference>
<reference key="4">
    <citation type="journal article" date="2005" name="J. Biol. Chem.">
        <title>A family of basic amino acid transporters of the vacuolar membrane from Saccharomyces cerevisiae.</title>
        <authorList>
            <person name="Shimazu M."/>
            <person name="Sekito T."/>
            <person name="Akiyama K."/>
            <person name="Ohsumi Y."/>
            <person name="Kakinuma Y."/>
        </authorList>
    </citation>
    <scope>FUNCTION PREDICTION</scope>
</reference>
<reference key="5">
    <citation type="journal article" date="2006" name="Proc. Natl. Acad. Sci. U.S.A.">
        <title>A global topology map of the Saccharomyces cerevisiae membrane proteome.</title>
        <authorList>
            <person name="Kim H."/>
            <person name="Melen K."/>
            <person name="Oesterberg M."/>
            <person name="von Heijne G."/>
        </authorList>
    </citation>
    <scope>TOPOLOGY [LARGE SCALE ANALYSIS]</scope>
    <source>
        <strain>ATCC 208353 / W303-1A</strain>
    </source>
</reference>
<reference key="6">
    <citation type="journal article" date="2007" name="J. Proteome Res.">
        <title>Large-scale phosphorylation analysis of alpha-factor-arrested Saccharomyces cerevisiae.</title>
        <authorList>
            <person name="Li X."/>
            <person name="Gerber S.A."/>
            <person name="Rudner A.D."/>
            <person name="Beausoleil S.A."/>
            <person name="Haas W."/>
            <person name="Villen J."/>
            <person name="Elias J.E."/>
            <person name="Gygi S.P."/>
        </authorList>
    </citation>
    <scope>PHOSPHORYLATION [LARGE SCALE ANALYSIS] AT SER-106</scope>
    <scope>IDENTIFICATION BY MASS SPECTROMETRY [LARGE SCALE ANALYSIS]</scope>
    <source>
        <strain>ADR376</strain>
    </source>
</reference>
<reference key="7">
    <citation type="journal article" date="2008" name="Mol. Cell. Proteomics">
        <title>A multidimensional chromatography technology for in-depth phosphoproteome analysis.</title>
        <authorList>
            <person name="Albuquerque C.P."/>
            <person name="Smolka M.B."/>
            <person name="Payne S.H."/>
            <person name="Bafna V."/>
            <person name="Eng J."/>
            <person name="Zhou H."/>
        </authorList>
    </citation>
    <scope>PHOSPHORYLATION [LARGE SCALE ANALYSIS] AT SER-99; SER-106 AND SER-192</scope>
    <scope>IDENTIFICATION BY MASS SPECTROMETRY [LARGE SCALE ANALYSIS]</scope>
</reference>
<reference key="8">
    <citation type="journal article" date="2009" name="Mol. Cell. Proteomics">
        <title>The yeast vacuolar membrane proteome.</title>
        <authorList>
            <person name="Wiederhold E."/>
            <person name="Gandhi T."/>
            <person name="Permentier H.P."/>
            <person name="Breitling R."/>
            <person name="Poolman B."/>
            <person name="Slotboom D.J."/>
        </authorList>
    </citation>
    <scope>SUBCELLULAR LOCATION</scope>
    <scope>IDENTIFICATION BY MASS SPECTROMETRY</scope>
</reference>
<reference key="9">
    <citation type="journal article" date="2009" name="Science">
        <title>Global analysis of Cdk1 substrate phosphorylation sites provides insights into evolution.</title>
        <authorList>
            <person name="Holt L.J."/>
            <person name="Tuch B.B."/>
            <person name="Villen J."/>
            <person name="Johnson A.D."/>
            <person name="Gygi S.P."/>
            <person name="Morgan D.O."/>
        </authorList>
    </citation>
    <scope>PHOSPHORYLATION [LARGE SCALE ANALYSIS] AT SER-62; SER-99; SER-106 AND SER-160</scope>
    <scope>IDENTIFICATION BY MASS SPECTROMETRY [LARGE SCALE ANALYSIS]</scope>
</reference>
<protein>
    <recommendedName>
        <fullName>Vacuolar basic amino acid transporter 4</fullName>
    </recommendedName>
</protein>
<accession>Q04602</accession>
<accession>D6VSA4</accession>
<evidence type="ECO:0000255" key="1"/>
<evidence type="ECO:0000256" key="2">
    <source>
        <dbReference type="SAM" id="MobiDB-lite"/>
    </source>
</evidence>
<evidence type="ECO:0000269" key="3">
    <source>
    </source>
</evidence>
<evidence type="ECO:0000269" key="4">
    <source>
    </source>
</evidence>
<evidence type="ECO:0000269" key="5">
    <source>
    </source>
</evidence>
<evidence type="ECO:0000305" key="6"/>
<evidence type="ECO:0007744" key="7">
    <source>
    </source>
</evidence>
<evidence type="ECO:0007744" key="8">
    <source>
    </source>
</evidence>
<evidence type="ECO:0007744" key="9">
    <source>
    </source>
</evidence>
<sequence length="768" mass="85683">MGKKDRQRKKLREFAKLKNRQRNLRKSVQTLKNEVQREAKVPRTSNQIALGNDKIEEINENSPLLSAPSKQEEVSIPKAVDIDTIDAQPLHEGPKIDDSPQDEVNSIKGKPADKANEDDLKPPSQHEACGNSALQSSITDFSDRSVSPLQSITSCNTPMSEHELPVSSSNSFERADDMPVVQADNQTSSSKSLHIVAPSPEVPVSGDEITSYGYGSIPQSIGDVENGLNPPYVENTSSDELVHDLTRRRIFSSCMCTYLFFIAMDSSIILVIASKIASEFHELWRLSLVISAYLLSNAIGQLVFLKLSLISSVKLLLCIAQFSFILGGYLSWSSAHFWTFIFARCVTGFGGGSLIALKSTIMNRFSQKNDSRYSLSASMITFAMGVVIGPFMMNLFDSSHGSGWRNAFLIPVPFCLVNASIMLADMYSVKSTLYGRPTPTLWKRFKNTLLSPDLYEILTLTLFLLCFVQVTSLDLTGLKNNTMIQALLFSVIIVCGILFFLIETSDTYMNSVISMSLQGDKRLIWTMIGISFCFAALMCIIPFGTTYFIIVLNLSTLQLAERLSPFFFSIVLGYFSVSYFWKSKGQNFLLKFVLSGATLLLYVALMGVSLNLPVWKQYICLSLPFLGSSMILTLLSNLYHEYHEQRKSPISGSIVYCFGAVGGTVGISLGGYVFHKTLIKLMHEKVMPFSKQGYLKKDLLKIIKHATESSDWVHESAPKFVFQTLIECYLQACRNVFKLSTLFFTITVVAIFIFNRIHCRSQNCLSLS</sequence>